<comment type="function">
    <text evidence="1">Involved in maceration and soft-rotting of plant tissue. Hydrolyzes the 1,4-alpha glycosidic bonds of de-esterified pectate in the smooth region of the plant cell wall (By similarity).</text>
</comment>
<comment type="catalytic activity">
    <reaction>
        <text>(1,4-alpha-D-galacturonosyl)n+m + H2O = (1,4-alpha-D-galacturonosyl)n + (1,4-alpha-D-galacturonosyl)m.</text>
        <dbReference type="EC" id="3.2.1.15"/>
    </reaction>
</comment>
<comment type="subcellular location">
    <subcellularLocation>
        <location evidence="1">Secreted</location>
    </subcellularLocation>
</comment>
<comment type="similarity">
    <text evidence="4">Belongs to the glycosyl hydrolase 28 family.</text>
</comment>
<organism>
    <name type="scientific">Neosartorya fischeri (strain ATCC 1020 / DSM 3700 / CBS 544.65 / FGSC A1164 / JCM 1740 / NRRL 181 / WB 181)</name>
    <name type="common">Aspergillus fischerianus</name>
    <dbReference type="NCBI Taxonomy" id="331117"/>
    <lineage>
        <taxon>Eukaryota</taxon>
        <taxon>Fungi</taxon>
        <taxon>Dikarya</taxon>
        <taxon>Ascomycota</taxon>
        <taxon>Pezizomycotina</taxon>
        <taxon>Eurotiomycetes</taxon>
        <taxon>Eurotiomycetidae</taxon>
        <taxon>Eurotiales</taxon>
        <taxon>Aspergillaceae</taxon>
        <taxon>Aspergillus</taxon>
        <taxon>Aspergillus subgen. Fumigati</taxon>
    </lineage>
</organism>
<name>PGLR_NEOFI</name>
<feature type="signal peptide" evidence="2">
    <location>
        <begin position="1"/>
        <end position="19"/>
    </location>
</feature>
<feature type="propeptide" id="PRO_0000393696" evidence="2">
    <location>
        <begin position="20"/>
        <end position="35"/>
    </location>
</feature>
<feature type="chain" id="PRO_0000393697" description="Probable endopolygalacturonase NFIA_008150">
    <location>
        <begin position="36"/>
        <end position="378"/>
    </location>
</feature>
<feature type="repeat" description="PbH1 1">
    <location>
        <begin position="147"/>
        <end position="169"/>
    </location>
</feature>
<feature type="repeat" description="PbH1 2">
    <location>
        <begin position="170"/>
        <end position="200"/>
    </location>
</feature>
<feature type="repeat" description="PbH1 3">
    <location>
        <begin position="201"/>
        <end position="222"/>
    </location>
</feature>
<feature type="repeat" description="PbH1 4">
    <location>
        <begin position="247"/>
        <end position="273"/>
    </location>
</feature>
<feature type="repeat" description="PbH1 5">
    <location>
        <begin position="281"/>
        <end position="303"/>
    </location>
</feature>
<feature type="active site" description="Proton donor" evidence="3">
    <location>
        <position position="215"/>
    </location>
</feature>
<feature type="active site" evidence="3">
    <location>
        <position position="237"/>
    </location>
</feature>
<feature type="glycosylation site" description="N-linked (GlcNAc...) asparagine" evidence="2">
    <location>
        <position position="254"/>
    </location>
</feature>
<feature type="glycosylation site" description="N-linked (GlcNAc...) asparagine" evidence="2">
    <location>
        <position position="327"/>
    </location>
</feature>
<feature type="disulfide bond" evidence="1">
    <location>
        <begin position="38"/>
        <end position="56"/>
    </location>
</feature>
<feature type="disulfide bond" evidence="1">
    <location>
        <begin position="217"/>
        <end position="233"/>
    </location>
</feature>
<feature type="disulfide bond" evidence="1">
    <location>
        <begin position="345"/>
        <end position="350"/>
    </location>
</feature>
<feature type="disulfide bond" evidence="1">
    <location>
        <begin position="369"/>
        <end position="378"/>
    </location>
</feature>
<protein>
    <recommendedName>
        <fullName>Probable endopolygalacturonase NFIA_008150</fullName>
        <ecNumber>3.2.1.15</ecNumber>
    </recommendedName>
    <alternativeName>
        <fullName>Pectinase NFIA_008150</fullName>
    </alternativeName>
    <alternativeName>
        <fullName>Polygalacturonase NFIA_008150</fullName>
    </alternativeName>
</protein>
<accession>A1D145</accession>
<gene>
    <name type="ORF">NFIA_008150</name>
</gene>
<keyword id="KW-0961">Cell wall biogenesis/degradation</keyword>
<keyword id="KW-1015">Disulfide bond</keyword>
<keyword id="KW-0325">Glycoprotein</keyword>
<keyword id="KW-0326">Glycosidase</keyword>
<keyword id="KW-0378">Hydrolase</keyword>
<keyword id="KW-1185">Reference proteome</keyword>
<keyword id="KW-0677">Repeat</keyword>
<keyword id="KW-0964">Secreted</keyword>
<keyword id="KW-0732">Signal</keyword>
<keyword id="KW-0865">Zymogen</keyword>
<sequence>MLKLIGSLVLLASAAEVIASPLAESVAPSITLEKRASCTFSGSNGAAAAMASQKACSTIVLSNVAVPAGTTLDLSDLADGTTVIFEGETTWGYKEWSGPLLQISGKNIKVEGASGATLNPDGARWWDGQGGNGGKTKPKFFAAHGLTSSSSITNLHILNTPVQAVSINGCDGLTVTDMTIDDSAGDTQGGHNTDAFDIGSSSNIIISGAKVYNQDDCVAVNSGTGITFTGGLCSGGHGLSIGSVGGRSDNTVENVSFTNSQVTKSDNGLRIKASKGKTGTIKGITYSGITLSSIRKYGILIEQNYDGGDLKGDPTSGIPITDLTMENISGKGAVASSGHNIAIVCGSGACSNWTWKNVEVTGGQTYGSCENVPSVAQC</sequence>
<reference key="1">
    <citation type="journal article" date="2008" name="PLoS Genet.">
        <title>Genomic islands in the pathogenic filamentous fungus Aspergillus fumigatus.</title>
        <authorList>
            <person name="Fedorova N.D."/>
            <person name="Khaldi N."/>
            <person name="Joardar V.S."/>
            <person name="Maiti R."/>
            <person name="Amedeo P."/>
            <person name="Anderson M.J."/>
            <person name="Crabtree J."/>
            <person name="Silva J.C."/>
            <person name="Badger J.H."/>
            <person name="Albarraq A."/>
            <person name="Angiuoli S."/>
            <person name="Bussey H."/>
            <person name="Bowyer P."/>
            <person name="Cotty P.J."/>
            <person name="Dyer P.S."/>
            <person name="Egan A."/>
            <person name="Galens K."/>
            <person name="Fraser-Liggett C.M."/>
            <person name="Haas B.J."/>
            <person name="Inman J.M."/>
            <person name="Kent R."/>
            <person name="Lemieux S."/>
            <person name="Malavazi I."/>
            <person name="Orvis J."/>
            <person name="Roemer T."/>
            <person name="Ronning C.M."/>
            <person name="Sundaram J.P."/>
            <person name="Sutton G."/>
            <person name="Turner G."/>
            <person name="Venter J.C."/>
            <person name="White O.R."/>
            <person name="Whitty B.R."/>
            <person name="Youngman P."/>
            <person name="Wolfe K.H."/>
            <person name="Goldman G.H."/>
            <person name="Wortman J.R."/>
            <person name="Jiang B."/>
            <person name="Denning D.W."/>
            <person name="Nierman W.C."/>
        </authorList>
    </citation>
    <scope>NUCLEOTIDE SEQUENCE [LARGE SCALE GENOMIC DNA]</scope>
    <source>
        <strain>ATCC 1020 / DSM 3700 / CBS 544.65 / FGSC A1164 / JCM 1740 / NRRL 181 / WB 181</strain>
    </source>
</reference>
<evidence type="ECO:0000250" key="1"/>
<evidence type="ECO:0000255" key="2"/>
<evidence type="ECO:0000255" key="3">
    <source>
        <dbReference type="PROSITE-ProRule" id="PRU10052"/>
    </source>
</evidence>
<evidence type="ECO:0000305" key="4"/>
<proteinExistence type="inferred from homology"/>
<dbReference type="EC" id="3.2.1.15"/>
<dbReference type="EMBL" id="DS027688">
    <property type="protein sequence ID" value="EAW22138.1"/>
    <property type="molecule type" value="Genomic_DNA"/>
</dbReference>
<dbReference type="RefSeq" id="XP_001264035.1">
    <property type="nucleotide sequence ID" value="XM_001264034.1"/>
</dbReference>
<dbReference type="SMR" id="A1D145"/>
<dbReference type="STRING" id="331117.A1D145"/>
<dbReference type="EnsemblFungi" id="EAW22138">
    <property type="protein sequence ID" value="EAW22138"/>
    <property type="gene ID" value="NFIA_008150"/>
</dbReference>
<dbReference type="GeneID" id="4591406"/>
<dbReference type="KEGG" id="nfi:NFIA_008150"/>
<dbReference type="VEuPathDB" id="FungiDB:NFIA_008150"/>
<dbReference type="eggNOG" id="ENOG502SHAF">
    <property type="taxonomic scope" value="Eukaryota"/>
</dbReference>
<dbReference type="HOGENOM" id="CLU_040116_0_0_1"/>
<dbReference type="OMA" id="GYCHGGH"/>
<dbReference type="OrthoDB" id="1546079at2759"/>
<dbReference type="Proteomes" id="UP000006702">
    <property type="component" value="Unassembled WGS sequence"/>
</dbReference>
<dbReference type="GO" id="GO:0005576">
    <property type="term" value="C:extracellular region"/>
    <property type="evidence" value="ECO:0000250"/>
    <property type="project" value="UniProtKB"/>
</dbReference>
<dbReference type="GO" id="GO:0004650">
    <property type="term" value="F:polygalacturonase activity"/>
    <property type="evidence" value="ECO:0000250"/>
    <property type="project" value="UniProtKB"/>
</dbReference>
<dbReference type="GO" id="GO:0071555">
    <property type="term" value="P:cell wall organization"/>
    <property type="evidence" value="ECO:0007669"/>
    <property type="project" value="UniProtKB-KW"/>
</dbReference>
<dbReference type="GO" id="GO:0045490">
    <property type="term" value="P:pectin catabolic process"/>
    <property type="evidence" value="ECO:0000250"/>
    <property type="project" value="UniProtKB"/>
</dbReference>
<dbReference type="FunFam" id="2.160.20.10:FF:000002">
    <property type="entry name" value="Endopolygalacturonase D"/>
    <property type="match status" value="1"/>
</dbReference>
<dbReference type="Gene3D" id="2.160.20.10">
    <property type="entry name" value="Single-stranded right-handed beta-helix, Pectin lyase-like"/>
    <property type="match status" value="1"/>
</dbReference>
<dbReference type="InterPro" id="IPR000743">
    <property type="entry name" value="Glyco_hydro_28"/>
</dbReference>
<dbReference type="InterPro" id="IPR050434">
    <property type="entry name" value="Glycosyl_hydrlase_28"/>
</dbReference>
<dbReference type="InterPro" id="IPR006626">
    <property type="entry name" value="PbH1"/>
</dbReference>
<dbReference type="InterPro" id="IPR012334">
    <property type="entry name" value="Pectin_lyas_fold"/>
</dbReference>
<dbReference type="InterPro" id="IPR011050">
    <property type="entry name" value="Pectin_lyase_fold/virulence"/>
</dbReference>
<dbReference type="PANTHER" id="PTHR31884">
    <property type="entry name" value="POLYGALACTURONASE"/>
    <property type="match status" value="1"/>
</dbReference>
<dbReference type="PANTHER" id="PTHR31884:SF1">
    <property type="entry name" value="POLYGALACTURONASE"/>
    <property type="match status" value="1"/>
</dbReference>
<dbReference type="Pfam" id="PF00295">
    <property type="entry name" value="Glyco_hydro_28"/>
    <property type="match status" value="1"/>
</dbReference>
<dbReference type="SMART" id="SM00710">
    <property type="entry name" value="PbH1"/>
    <property type="match status" value="5"/>
</dbReference>
<dbReference type="SUPFAM" id="SSF51126">
    <property type="entry name" value="Pectin lyase-like"/>
    <property type="match status" value="1"/>
</dbReference>
<dbReference type="PROSITE" id="PS00502">
    <property type="entry name" value="POLYGALACTURONASE"/>
    <property type="match status" value="1"/>
</dbReference>